<gene>
    <name type="ordered locus">Adeh_1087</name>
</gene>
<feature type="chain" id="PRO_1000061421" description="UPF0235 protein Adeh_1087">
    <location>
        <begin position="1"/>
        <end position="95"/>
    </location>
</feature>
<evidence type="ECO:0000255" key="1">
    <source>
        <dbReference type="HAMAP-Rule" id="MF_00634"/>
    </source>
</evidence>
<sequence length="95" mass="9701">MAWARDEGGAAVLEILVQPRASRTRAVGEHDGRLKIQLAAPPVDGAANAALVEFLAVALGVRRADVALLRGEAGRRKTVRVAGITAAAAVAALAP</sequence>
<dbReference type="EMBL" id="CP000251">
    <property type="protein sequence ID" value="ABC80862.1"/>
    <property type="molecule type" value="Genomic_DNA"/>
</dbReference>
<dbReference type="RefSeq" id="WP_011420145.1">
    <property type="nucleotide sequence ID" value="NC_007760.1"/>
</dbReference>
<dbReference type="SMR" id="Q2IPY3"/>
<dbReference type="STRING" id="290397.Adeh_1087"/>
<dbReference type="KEGG" id="ade:Adeh_1087"/>
<dbReference type="eggNOG" id="COG1872">
    <property type="taxonomic scope" value="Bacteria"/>
</dbReference>
<dbReference type="HOGENOM" id="CLU_130694_5_0_7"/>
<dbReference type="OrthoDB" id="9800587at2"/>
<dbReference type="Proteomes" id="UP000001935">
    <property type="component" value="Chromosome"/>
</dbReference>
<dbReference type="GO" id="GO:0005737">
    <property type="term" value="C:cytoplasm"/>
    <property type="evidence" value="ECO:0007669"/>
    <property type="project" value="TreeGrafter"/>
</dbReference>
<dbReference type="Gene3D" id="3.30.1200.10">
    <property type="entry name" value="YggU-like"/>
    <property type="match status" value="1"/>
</dbReference>
<dbReference type="HAMAP" id="MF_00634">
    <property type="entry name" value="UPF0235"/>
    <property type="match status" value="1"/>
</dbReference>
<dbReference type="InterPro" id="IPR003746">
    <property type="entry name" value="DUF167"/>
</dbReference>
<dbReference type="InterPro" id="IPR036591">
    <property type="entry name" value="YggU-like_sf"/>
</dbReference>
<dbReference type="NCBIfam" id="TIGR00251">
    <property type="entry name" value="DUF167 family protein"/>
    <property type="match status" value="1"/>
</dbReference>
<dbReference type="PANTHER" id="PTHR13420">
    <property type="entry name" value="UPF0235 PROTEIN C15ORF40"/>
    <property type="match status" value="1"/>
</dbReference>
<dbReference type="PANTHER" id="PTHR13420:SF7">
    <property type="entry name" value="UPF0235 PROTEIN C15ORF40"/>
    <property type="match status" value="1"/>
</dbReference>
<dbReference type="Pfam" id="PF02594">
    <property type="entry name" value="DUF167"/>
    <property type="match status" value="1"/>
</dbReference>
<dbReference type="SMART" id="SM01152">
    <property type="entry name" value="DUF167"/>
    <property type="match status" value="1"/>
</dbReference>
<dbReference type="SUPFAM" id="SSF69786">
    <property type="entry name" value="YggU-like"/>
    <property type="match status" value="1"/>
</dbReference>
<proteinExistence type="inferred from homology"/>
<accession>Q2IPY3</accession>
<reference key="1">
    <citation type="submission" date="2006-01" db="EMBL/GenBank/DDBJ databases">
        <title>Complete sequence of Anaeromyxobacter dehalogenans 2CP-C.</title>
        <authorList>
            <person name="Copeland A."/>
            <person name="Lucas S."/>
            <person name="Lapidus A."/>
            <person name="Barry K."/>
            <person name="Detter J.C."/>
            <person name="Glavina T."/>
            <person name="Hammon N."/>
            <person name="Israni S."/>
            <person name="Pitluck S."/>
            <person name="Brettin T."/>
            <person name="Bruce D."/>
            <person name="Han C."/>
            <person name="Tapia R."/>
            <person name="Gilna P."/>
            <person name="Kiss H."/>
            <person name="Schmutz J."/>
            <person name="Larimer F."/>
            <person name="Land M."/>
            <person name="Kyrpides N."/>
            <person name="Anderson I."/>
            <person name="Sanford R.A."/>
            <person name="Ritalahti K.M."/>
            <person name="Thomas H.S."/>
            <person name="Kirby J.R."/>
            <person name="Zhulin I.B."/>
            <person name="Loeffler F.E."/>
            <person name="Richardson P."/>
        </authorList>
    </citation>
    <scope>NUCLEOTIDE SEQUENCE [LARGE SCALE GENOMIC DNA]</scope>
    <source>
        <strain>2CP-C</strain>
    </source>
</reference>
<comment type="similarity">
    <text evidence="1">Belongs to the UPF0235 family.</text>
</comment>
<name>Y1087_ANADE</name>
<organism>
    <name type="scientific">Anaeromyxobacter dehalogenans (strain 2CP-C)</name>
    <dbReference type="NCBI Taxonomy" id="290397"/>
    <lineage>
        <taxon>Bacteria</taxon>
        <taxon>Pseudomonadati</taxon>
        <taxon>Myxococcota</taxon>
        <taxon>Myxococcia</taxon>
        <taxon>Myxococcales</taxon>
        <taxon>Cystobacterineae</taxon>
        <taxon>Anaeromyxobacteraceae</taxon>
        <taxon>Anaeromyxobacter</taxon>
    </lineage>
</organism>
<protein>
    <recommendedName>
        <fullName evidence="1">UPF0235 protein Adeh_1087</fullName>
    </recommendedName>
</protein>
<keyword id="KW-1185">Reference proteome</keyword>